<dbReference type="EMBL" id="X68563">
    <property type="protein sequence ID" value="CAA48564.1"/>
    <property type="molecule type" value="Genomic_DNA"/>
</dbReference>
<dbReference type="EMBL" id="U18466">
    <property type="protein sequence ID" value="AAA65279.1"/>
    <property type="molecule type" value="Genomic_DNA"/>
</dbReference>
<dbReference type="PIR" id="S29971">
    <property type="entry name" value="S29971"/>
</dbReference>
<dbReference type="RefSeq" id="NP_042743.1">
    <property type="nucleotide sequence ID" value="NC_001659.2"/>
</dbReference>
<dbReference type="SMR" id="Q89769"/>
<dbReference type="GeneID" id="22220431"/>
<dbReference type="KEGG" id="vg:22220431"/>
<dbReference type="Proteomes" id="UP000000624">
    <property type="component" value="Segment"/>
</dbReference>
<dbReference type="GO" id="GO:0039642">
    <property type="term" value="C:virion nucleoid"/>
    <property type="evidence" value="ECO:0000314"/>
    <property type="project" value="CACAO"/>
</dbReference>
<dbReference type="GO" id="GO:0003677">
    <property type="term" value="F:DNA binding"/>
    <property type="evidence" value="ECO:0007669"/>
    <property type="project" value="UniProtKB-KW"/>
</dbReference>
<gene>
    <name type="ordered locus">Ba71V-049</name>
    <name type="ORF">K78R</name>
</gene>
<protein>
    <recommendedName>
        <fullName>Structural DNA-binding protein p10</fullName>
        <shortName>p10</shortName>
    </recommendedName>
</protein>
<name>P10_ASFB7</name>
<sequence>MPTKAGTKSTANKKTTKGSSKSGSSRGHTGKTHASSSMHSGMLYKDMVNIARSRGIPIYQNGSRLTKSELEKKIKRSK</sequence>
<organism>
    <name type="scientific">African swine fever virus (strain Badajoz 1971 Vero-adapted)</name>
    <name type="common">Ba71V</name>
    <name type="synonym">ASFV</name>
    <dbReference type="NCBI Taxonomy" id="10498"/>
    <lineage>
        <taxon>Viruses</taxon>
        <taxon>Varidnaviria</taxon>
        <taxon>Bamfordvirae</taxon>
        <taxon>Nucleocytoviricota</taxon>
        <taxon>Pokkesviricetes</taxon>
        <taxon>Asfuvirales</taxon>
        <taxon>Asfarviridae</taxon>
        <taxon>Asfivirus</taxon>
        <taxon>African swine fever virus</taxon>
    </lineage>
</organism>
<comment type="function">
    <text evidence="4">May play a role in genome packaging through direct interaction with viral DNA. Binds to ssDNA and dsDNA with the same apparent affinity in vitro.</text>
</comment>
<comment type="subcellular location">
    <subcellularLocation>
        <location evidence="2">Virion</location>
    </subcellularLocation>
    <text evidence="2">Found in association with the viral nucleoid.</text>
</comment>
<comment type="induction">
    <text evidence="3">Expressed in the early phase of the viral replicative cycle.</text>
</comment>
<comment type="similarity">
    <text evidence="5">Belongs to the asfivirus P10 family.</text>
</comment>
<reference key="1">
    <citation type="journal article" date="1993" name="Arch. Virol.">
        <title>Structure and expression in E. coli of the gene coding for protein p10 of African swine fever virus.</title>
        <authorList>
            <person name="Munoz M."/>
            <person name="Freije J.M.P."/>
            <person name="Salas M.L."/>
            <person name="Vinuela E."/>
            <person name="Lopez-Otin C."/>
        </authorList>
    </citation>
    <scope>NUCLEOTIDE SEQUENCE [GENOMIC DNA]</scope>
    <scope>PROTEIN SEQUENCE OF 2-16</scope>
    <scope>FUNCTION</scope>
</reference>
<reference key="2">
    <citation type="journal article" date="1995" name="Virology">
        <title>Analysis of the complete nucleotide sequence of African swine fever virus.</title>
        <authorList>
            <person name="Yanez R.J."/>
            <person name="Rodriguez J.M."/>
            <person name="Nogal M.L."/>
            <person name="Yuste L."/>
            <person name="Enriquez C."/>
            <person name="Rodriguez J.F."/>
            <person name="Vinuela E."/>
        </authorList>
    </citation>
    <scope>NUCLEOTIDE SEQUENCE [LARGE SCALE GENOMIC DNA]</scope>
</reference>
<reference key="3">
    <citation type="journal article" date="2018" name="J. Virol.">
        <title>A Proteomic Atlas of the African Swine Fever Virus Particle.</title>
        <authorList>
            <person name="Alejo A."/>
            <person name="Matamoros T."/>
            <person name="Guerra M."/>
            <person name="Andres G."/>
        </authorList>
    </citation>
    <scope>SUBCELLULAR LOCATION</scope>
</reference>
<reference key="4">
    <citation type="journal article" date="2020" name="J. Virol.">
        <title>The African Swine Fever Virus Transcriptome.</title>
        <authorList>
            <person name="Cackett G."/>
            <person name="Matelska D."/>
            <person name="Sykora M."/>
            <person name="Portugal R."/>
            <person name="Malecki M."/>
            <person name="Baehler J."/>
            <person name="Dixon L."/>
            <person name="Werner F."/>
        </authorList>
    </citation>
    <scope>INDUCTION</scope>
</reference>
<organismHost>
    <name type="scientific">Ornithodoros</name>
    <name type="common">relapsing fever ticks</name>
    <dbReference type="NCBI Taxonomy" id="6937"/>
</organismHost>
<organismHost>
    <name type="scientific">Sus scrofa</name>
    <name type="common">Pig</name>
    <dbReference type="NCBI Taxonomy" id="9823"/>
</organismHost>
<keyword id="KW-0903">Direct protein sequencing</keyword>
<keyword id="KW-0238">DNA-binding</keyword>
<keyword id="KW-0244">Early protein</keyword>
<keyword id="KW-1185">Reference proteome</keyword>
<keyword id="KW-0946">Virion</keyword>
<evidence type="ECO:0000256" key="1">
    <source>
        <dbReference type="SAM" id="MobiDB-lite"/>
    </source>
</evidence>
<evidence type="ECO:0000269" key="2">
    <source>
    </source>
</evidence>
<evidence type="ECO:0000269" key="3">
    <source>
    </source>
</evidence>
<evidence type="ECO:0000269" key="4">
    <source>
    </source>
</evidence>
<evidence type="ECO:0000305" key="5"/>
<accession>Q89769</accession>
<feature type="initiator methionine" description="Removed" evidence="4">
    <location>
        <position position="1"/>
    </location>
</feature>
<feature type="chain" id="PRO_0000373387" description="Structural DNA-binding protein p10">
    <location>
        <begin position="2"/>
        <end position="78"/>
    </location>
</feature>
<feature type="region of interest" description="Disordered" evidence="1">
    <location>
        <begin position="1"/>
        <end position="41"/>
    </location>
</feature>
<feature type="compositionally biased region" description="Low complexity" evidence="1">
    <location>
        <begin position="1"/>
        <end position="27"/>
    </location>
</feature>
<proteinExistence type="evidence at protein level"/>